<organism>
    <name type="scientific">Haemophilus influenzae (strain ATCC 51907 / DSM 11121 / KW20 / Rd)</name>
    <dbReference type="NCBI Taxonomy" id="71421"/>
    <lineage>
        <taxon>Bacteria</taxon>
        <taxon>Pseudomonadati</taxon>
        <taxon>Pseudomonadota</taxon>
        <taxon>Gammaproteobacteria</taxon>
        <taxon>Pasteurellales</taxon>
        <taxon>Pasteurellaceae</taxon>
        <taxon>Haemophilus</taxon>
    </lineage>
</organism>
<proteinExistence type="evidence at protein level"/>
<accession>P71336</accession>
<name>Y052_HAEIN</name>
<feature type="signal peptide" evidence="1">
    <location>
        <begin position="1"/>
        <end position="24"/>
    </location>
</feature>
<feature type="chain" id="PRO_0000031815" description="Uncharacterized protein HI_0052">
    <location>
        <begin position="25"/>
        <end position="328"/>
    </location>
</feature>
<sequence>MKSIKGLGKLLLASSILFSSSAFAKTIIKLGHYNSDIHPSHIALQEYFKKTIENETNHKYEIRLYPNNQLGGEDQIVNGLRNGTIEAGITGLLLQNVDPIFGVWEWPYLFKDNQEAKKVLESPIANKIGQKMEKYGIKLLAYGMNGFRVISSNKKLEKFDDFKGLRLRVPLNSLFVDWAKAMNINPQSMPLSEVFTALEQKVIDGQENPYMLIKDSGLYEVQKYIIQSNHIFSPGLLQISLKTWNKIPKEDQIIFEKAAKLYQEKEWELAIKTELEVKDYLAKHGNEIIVPSEAFKNDMVNASKVLYDSFYKKYDWAKDVVQKINEAK</sequence>
<dbReference type="EMBL" id="L42023">
    <property type="protein sequence ID" value="AAC21730.1"/>
    <property type="molecule type" value="Genomic_DNA"/>
</dbReference>
<dbReference type="PIR" id="E64141">
    <property type="entry name" value="E64141"/>
</dbReference>
<dbReference type="RefSeq" id="NP_438225.1">
    <property type="nucleotide sequence ID" value="NC_000907.1"/>
</dbReference>
<dbReference type="SMR" id="P71336"/>
<dbReference type="STRING" id="71421.HI_0052"/>
<dbReference type="EnsemblBacteria" id="AAC21730">
    <property type="protein sequence ID" value="AAC21730"/>
    <property type="gene ID" value="HI_0052"/>
</dbReference>
<dbReference type="KEGG" id="hin:HI_0052"/>
<dbReference type="PATRIC" id="fig|71421.8.peg.52"/>
<dbReference type="eggNOG" id="COG1638">
    <property type="taxonomic scope" value="Bacteria"/>
</dbReference>
<dbReference type="HOGENOM" id="CLU_036176_1_1_6"/>
<dbReference type="OrthoDB" id="8690069at2"/>
<dbReference type="PhylomeDB" id="P71336"/>
<dbReference type="BioCyc" id="HINF71421:G1GJ1-53-MONOMER"/>
<dbReference type="Proteomes" id="UP000000579">
    <property type="component" value="Chromosome"/>
</dbReference>
<dbReference type="GO" id="GO:0030288">
    <property type="term" value="C:outer membrane-bounded periplasmic space"/>
    <property type="evidence" value="ECO:0007669"/>
    <property type="project" value="InterPro"/>
</dbReference>
<dbReference type="GO" id="GO:0055085">
    <property type="term" value="P:transmembrane transport"/>
    <property type="evidence" value="ECO:0007669"/>
    <property type="project" value="InterPro"/>
</dbReference>
<dbReference type="CDD" id="cd13603">
    <property type="entry name" value="PBP2_TRAP_Siap_TeaA_like"/>
    <property type="match status" value="1"/>
</dbReference>
<dbReference type="Gene3D" id="3.40.190.170">
    <property type="entry name" value="Bacterial extracellular solute-binding protein, family 7"/>
    <property type="match status" value="1"/>
</dbReference>
<dbReference type="InterPro" id="IPR018389">
    <property type="entry name" value="DctP_fam"/>
</dbReference>
<dbReference type="InterPro" id="IPR004682">
    <property type="entry name" value="TRAP_DctP"/>
</dbReference>
<dbReference type="InterPro" id="IPR038404">
    <property type="entry name" value="TRAP_DctP_sf"/>
</dbReference>
<dbReference type="NCBIfam" id="TIGR00787">
    <property type="entry name" value="dctP"/>
    <property type="match status" value="1"/>
</dbReference>
<dbReference type="NCBIfam" id="NF037995">
    <property type="entry name" value="TRAP_S1"/>
    <property type="match status" value="1"/>
</dbReference>
<dbReference type="PANTHER" id="PTHR33376">
    <property type="match status" value="1"/>
</dbReference>
<dbReference type="PANTHER" id="PTHR33376:SF4">
    <property type="entry name" value="SIALIC ACID-BINDING PERIPLASMIC PROTEIN SIAP"/>
    <property type="match status" value="1"/>
</dbReference>
<dbReference type="Pfam" id="PF03480">
    <property type="entry name" value="DctP"/>
    <property type="match status" value="1"/>
</dbReference>
<dbReference type="PIRSF" id="PIRSF006470">
    <property type="entry name" value="DctB"/>
    <property type="match status" value="1"/>
</dbReference>
<comment type="subcellular location">
    <subcellularLocation>
        <location evidence="2">Periplasm</location>
    </subcellularLocation>
</comment>
<comment type="similarity">
    <text evidence="2">Belongs to the bacterial solute-binding protein 7 family.</text>
</comment>
<evidence type="ECO:0000255" key="1"/>
<evidence type="ECO:0000305" key="2"/>
<reference key="1">
    <citation type="journal article" date="1995" name="Science">
        <title>Whole-genome random sequencing and assembly of Haemophilus influenzae Rd.</title>
        <authorList>
            <person name="Fleischmann R.D."/>
            <person name="Adams M.D."/>
            <person name="White O."/>
            <person name="Clayton R.A."/>
            <person name="Kirkness E.F."/>
            <person name="Kerlavage A.R."/>
            <person name="Bult C.J."/>
            <person name="Tomb J.-F."/>
            <person name="Dougherty B.A."/>
            <person name="Merrick J.M."/>
            <person name="McKenney K."/>
            <person name="Sutton G.G."/>
            <person name="FitzHugh W."/>
            <person name="Fields C.A."/>
            <person name="Gocayne J.D."/>
            <person name="Scott J.D."/>
            <person name="Shirley R."/>
            <person name="Liu L.-I."/>
            <person name="Glodek A."/>
            <person name="Kelley J.M."/>
            <person name="Weidman J.F."/>
            <person name="Phillips C.A."/>
            <person name="Spriggs T."/>
            <person name="Hedblom E."/>
            <person name="Cotton M.D."/>
            <person name="Utterback T.R."/>
            <person name="Hanna M.C."/>
            <person name="Nguyen D.T."/>
            <person name="Saudek D.M."/>
            <person name="Brandon R.C."/>
            <person name="Fine L.D."/>
            <person name="Fritchman J.L."/>
            <person name="Fuhrmann J.L."/>
            <person name="Geoghagen N.S.M."/>
            <person name="Gnehm C.L."/>
            <person name="McDonald L.A."/>
            <person name="Small K.V."/>
            <person name="Fraser C.M."/>
            <person name="Smith H.O."/>
            <person name="Venter J.C."/>
        </authorList>
    </citation>
    <scope>NUCLEOTIDE SEQUENCE [LARGE SCALE GENOMIC DNA]</scope>
    <source>
        <strain>ATCC 51907 / DSM 11121 / KW20 / Rd</strain>
    </source>
</reference>
<reference key="2">
    <citation type="journal article" date="2000" name="Electrophoresis">
        <title>Two-dimensional map of the proteome of Haemophilus influenzae.</title>
        <authorList>
            <person name="Langen H."/>
            <person name="Takacs B."/>
            <person name="Evers S."/>
            <person name="Berndt P."/>
            <person name="Lahm H.W."/>
            <person name="Wipf B."/>
            <person name="Gray C."/>
            <person name="Fountoulakis M."/>
        </authorList>
    </citation>
    <scope>IDENTIFICATION BY MASS SPECTROMETRY</scope>
    <source>
        <strain>ATCC 51907 / DSM 11121 / KW20 / Rd</strain>
    </source>
</reference>
<protein>
    <recommendedName>
        <fullName>Uncharacterized protein HI_0052</fullName>
    </recommendedName>
</protein>
<gene>
    <name type="ordered locus">HI_0052</name>
</gene>
<keyword id="KW-0574">Periplasm</keyword>
<keyword id="KW-1185">Reference proteome</keyword>
<keyword id="KW-0732">Signal</keyword>
<keyword id="KW-0813">Transport</keyword>